<feature type="initiator methionine" description="Removed" evidence="1">
    <location>
        <position position="1"/>
    </location>
</feature>
<feature type="chain" id="PRO_0000054465" description="Alcohol dehydrogenase">
    <location>
        <begin position="2"/>
        <end position="254"/>
    </location>
</feature>
<feature type="active site" description="Proton acceptor" evidence="2">
    <location>
        <position position="151"/>
    </location>
</feature>
<feature type="binding site" evidence="1">
    <location>
        <begin position="10"/>
        <end position="33"/>
    </location>
    <ligand>
        <name>NAD(+)</name>
        <dbReference type="ChEBI" id="CHEBI:57540"/>
    </ligand>
</feature>
<feature type="binding site" evidence="1">
    <location>
        <position position="138"/>
    </location>
    <ligand>
        <name>substrate</name>
    </ligand>
</feature>
<organism>
    <name type="scientific">Drosophila heteroneura</name>
    <name type="common">Fruit fly</name>
    <dbReference type="NCBI Taxonomy" id="32382"/>
    <lineage>
        <taxon>Eukaryota</taxon>
        <taxon>Metazoa</taxon>
        <taxon>Ecdysozoa</taxon>
        <taxon>Arthropoda</taxon>
        <taxon>Hexapoda</taxon>
        <taxon>Insecta</taxon>
        <taxon>Pterygota</taxon>
        <taxon>Neoptera</taxon>
        <taxon>Endopterygota</taxon>
        <taxon>Diptera</taxon>
        <taxon>Brachycera</taxon>
        <taxon>Muscomorpha</taxon>
        <taxon>Ephydroidea</taxon>
        <taxon>Drosophilidae</taxon>
        <taxon>Drosophila</taxon>
        <taxon>Hawaiian Drosophila</taxon>
    </lineage>
</organism>
<accession>P21898</accession>
<keyword id="KW-0520">NAD</keyword>
<keyword id="KW-0560">Oxidoreductase</keyword>
<comment type="catalytic activity">
    <reaction evidence="2">
        <text>a primary alcohol + NAD(+) = an aldehyde + NADH + H(+)</text>
        <dbReference type="Rhea" id="RHEA:10736"/>
        <dbReference type="ChEBI" id="CHEBI:15378"/>
        <dbReference type="ChEBI" id="CHEBI:15734"/>
        <dbReference type="ChEBI" id="CHEBI:17478"/>
        <dbReference type="ChEBI" id="CHEBI:57540"/>
        <dbReference type="ChEBI" id="CHEBI:57945"/>
        <dbReference type="EC" id="1.1.1.1"/>
    </reaction>
</comment>
<comment type="catalytic activity">
    <reaction evidence="2">
        <text>a secondary alcohol + NAD(+) = a ketone + NADH + H(+)</text>
        <dbReference type="Rhea" id="RHEA:10740"/>
        <dbReference type="ChEBI" id="CHEBI:15378"/>
        <dbReference type="ChEBI" id="CHEBI:17087"/>
        <dbReference type="ChEBI" id="CHEBI:35681"/>
        <dbReference type="ChEBI" id="CHEBI:57540"/>
        <dbReference type="ChEBI" id="CHEBI:57945"/>
        <dbReference type="EC" id="1.1.1.1"/>
    </reaction>
</comment>
<comment type="subunit">
    <text>Homodimer.</text>
</comment>
<comment type="similarity">
    <text evidence="3">Belongs to the short-chain dehydrogenases/reductases (SDR) family.</text>
</comment>
<evidence type="ECO:0000250" key="1"/>
<evidence type="ECO:0000255" key="2">
    <source>
        <dbReference type="PROSITE-ProRule" id="PRU10001"/>
    </source>
</evidence>
<evidence type="ECO:0000305" key="3"/>
<gene>
    <name type="primary">Adh</name>
</gene>
<protein>
    <recommendedName>
        <fullName>Alcohol dehydrogenase</fullName>
        <ecNumber>1.1.1.1</ecNumber>
    </recommendedName>
</protein>
<dbReference type="EC" id="1.1.1.1"/>
<dbReference type="EMBL" id="M63287">
    <property type="protein sequence ID" value="AAA28351.1"/>
    <property type="molecule type" value="Genomic_DNA"/>
</dbReference>
<dbReference type="PIR" id="A23724">
    <property type="entry name" value="A23724"/>
</dbReference>
<dbReference type="SMR" id="P21898"/>
<dbReference type="GO" id="GO:0005737">
    <property type="term" value="C:cytoplasm"/>
    <property type="evidence" value="ECO:0007669"/>
    <property type="project" value="TreeGrafter"/>
</dbReference>
<dbReference type="GO" id="GO:0004022">
    <property type="term" value="F:alcohol dehydrogenase (NAD+) activity"/>
    <property type="evidence" value="ECO:0000250"/>
    <property type="project" value="UniProtKB"/>
</dbReference>
<dbReference type="GO" id="GO:0006066">
    <property type="term" value="P:alcohol metabolic process"/>
    <property type="evidence" value="ECO:0007669"/>
    <property type="project" value="InterPro"/>
</dbReference>
<dbReference type="CDD" id="cd05323">
    <property type="entry name" value="ADH_SDR_c_like"/>
    <property type="match status" value="1"/>
</dbReference>
<dbReference type="FunFam" id="3.40.50.720:FF:000302">
    <property type="entry name" value="Alcohol dehydrogenase"/>
    <property type="match status" value="1"/>
</dbReference>
<dbReference type="Gene3D" id="3.40.50.720">
    <property type="entry name" value="NAD(P)-binding Rossmann-like Domain"/>
    <property type="match status" value="1"/>
</dbReference>
<dbReference type="InterPro" id="IPR002425">
    <property type="entry name" value="ADH_Drosophila-type"/>
</dbReference>
<dbReference type="InterPro" id="IPR036291">
    <property type="entry name" value="NAD(P)-bd_dom_sf"/>
</dbReference>
<dbReference type="InterPro" id="IPR020904">
    <property type="entry name" value="Sc_DH/Rdtase_CS"/>
</dbReference>
<dbReference type="InterPro" id="IPR002347">
    <property type="entry name" value="SDR_fam"/>
</dbReference>
<dbReference type="PANTHER" id="PTHR44229">
    <property type="entry name" value="15-HYDROXYPROSTAGLANDIN DEHYDROGENASE [NAD(+)]"/>
    <property type="match status" value="1"/>
</dbReference>
<dbReference type="PANTHER" id="PTHR44229:SF8">
    <property type="entry name" value="ALCOHOL DEHYDROGENASE-RELATED"/>
    <property type="match status" value="1"/>
</dbReference>
<dbReference type="Pfam" id="PF00106">
    <property type="entry name" value="adh_short"/>
    <property type="match status" value="1"/>
</dbReference>
<dbReference type="PRINTS" id="PR01168">
    <property type="entry name" value="ALCDHDRGNASE"/>
</dbReference>
<dbReference type="PRINTS" id="PR01167">
    <property type="entry name" value="INSADHFAMILY"/>
</dbReference>
<dbReference type="PRINTS" id="PR00080">
    <property type="entry name" value="SDRFAMILY"/>
</dbReference>
<dbReference type="SUPFAM" id="SSF51735">
    <property type="entry name" value="NAD(P)-binding Rossmann-fold domains"/>
    <property type="match status" value="1"/>
</dbReference>
<dbReference type="PROSITE" id="PS00061">
    <property type="entry name" value="ADH_SHORT"/>
    <property type="match status" value="1"/>
</dbReference>
<sequence>MVIANSNIIFVAGLGGIGLDTSREIVKSGPKNLVVLDRIDNPAAIAELKALNPKVTITFYPYDVTVPLAETKKLLKTIFDKLKTVDLLINGAGILDDTQIERTIAVNFTGTVNTTTAIMDFWDKRKGGPGGVVANICSVTGFNSIYQVPVYSASKAAALSFTTSLAKLAHITGVTVYSINPGITKTVLVHKFNSWLNVEPRVAELLLEHPTQTTLQCAQNFVKAIEANQNGAIWKLDLGRLDAIEWTKHWDSGI</sequence>
<proteinExistence type="inferred from homology"/>
<name>ADH_DROHE</name>
<reference key="1">
    <citation type="journal article" date="1991" name="Mol. Biol. Evol.">
        <title>Rates of DNA change and phylogeny from the DNA sequences of the alcohol dehydrogenase gene for five closely related species of Hawaiian Drosophila.</title>
        <authorList>
            <person name="Rowan R.G."/>
            <person name="Hunt J.A."/>
        </authorList>
    </citation>
    <scope>NUCLEOTIDE SEQUENCE [GENOMIC DNA]</scope>
</reference>